<keyword id="KW-0539">Nucleus</keyword>
<keyword id="KW-1185">Reference proteome</keyword>
<keyword id="KW-0804">Transcription</keyword>
<keyword id="KW-0805">Transcription regulation</keyword>
<comment type="function">
    <text evidence="1">The TFIID basal transcription factor complex plays a major role in the initiation of RNA polymerase II (Pol II)-dependent transcription. TFIID recognizes and binds promoters via its subunit TBP, a TATA-box-binding protein, and promotes assembly of the pre-initiation complex (PIC). The TFIID complex consists of TBP and TBP-associated factors (TAFs), including TAF1, TAF2, TAF3, TAF4, TAF5, TAF6, TAF7, TAF8, TAF9, TAF10, TAF11, TAF12 and TAF13. TAF13, together with TAF11 and TBP, play key roles during promoter binding by the TFIID and TFIIA transcription factor complexes.</text>
</comment>
<comment type="subunit">
    <text evidence="1">Component of the TFIID basal transcription factor complex, composed of TATA-box-binding protein TBP, and a number of TBP-associated factors (TAFs), including TAF1, TAF2, TAF3, TAF4, TAF5, TAF6, TAF7, TAF8, TAF9, TAF10, TAF11, TAF12 and TAF13. Interacts with TBP, and more strongly with TAF10 and TAF11.</text>
</comment>
<comment type="interaction">
    <interactant intactId="EBI-309424">
        <id>P61216</id>
    </interactant>
    <interactant intactId="EBI-309427">
        <id>Q99JX1</id>
        <label>Taf11</label>
    </interactant>
    <organismsDiffer>false</organismsDiffer>
    <experiments>3</experiments>
</comment>
<comment type="subcellular location">
    <subcellularLocation>
        <location evidence="1">Nucleus</location>
    </subcellularLocation>
</comment>
<comment type="domain">
    <text evidence="1">The binding of TAF10 and TAF11 requires distinct domains of TAF13.</text>
</comment>
<comment type="similarity">
    <text evidence="3">Belongs to the TAF13 family.</text>
</comment>
<reference key="1">
    <citation type="journal article" date="2005" name="Science">
        <title>The transcriptional landscape of the mammalian genome.</title>
        <authorList>
            <person name="Carninci P."/>
            <person name="Kasukawa T."/>
            <person name="Katayama S."/>
            <person name="Gough J."/>
            <person name="Frith M.C."/>
            <person name="Maeda N."/>
            <person name="Oyama R."/>
            <person name="Ravasi T."/>
            <person name="Lenhard B."/>
            <person name="Wells C."/>
            <person name="Kodzius R."/>
            <person name="Shimokawa K."/>
            <person name="Bajic V.B."/>
            <person name="Brenner S.E."/>
            <person name="Batalov S."/>
            <person name="Forrest A.R."/>
            <person name="Zavolan M."/>
            <person name="Davis M.J."/>
            <person name="Wilming L.G."/>
            <person name="Aidinis V."/>
            <person name="Allen J.E."/>
            <person name="Ambesi-Impiombato A."/>
            <person name="Apweiler R."/>
            <person name="Aturaliya R.N."/>
            <person name="Bailey T.L."/>
            <person name="Bansal M."/>
            <person name="Baxter L."/>
            <person name="Beisel K.W."/>
            <person name="Bersano T."/>
            <person name="Bono H."/>
            <person name="Chalk A.M."/>
            <person name="Chiu K.P."/>
            <person name="Choudhary V."/>
            <person name="Christoffels A."/>
            <person name="Clutterbuck D.R."/>
            <person name="Crowe M.L."/>
            <person name="Dalla E."/>
            <person name="Dalrymple B.P."/>
            <person name="de Bono B."/>
            <person name="Della Gatta G."/>
            <person name="di Bernardo D."/>
            <person name="Down T."/>
            <person name="Engstrom P."/>
            <person name="Fagiolini M."/>
            <person name="Faulkner G."/>
            <person name="Fletcher C.F."/>
            <person name="Fukushima T."/>
            <person name="Furuno M."/>
            <person name="Futaki S."/>
            <person name="Gariboldi M."/>
            <person name="Georgii-Hemming P."/>
            <person name="Gingeras T.R."/>
            <person name="Gojobori T."/>
            <person name="Green R.E."/>
            <person name="Gustincich S."/>
            <person name="Harbers M."/>
            <person name="Hayashi Y."/>
            <person name="Hensch T.K."/>
            <person name="Hirokawa N."/>
            <person name="Hill D."/>
            <person name="Huminiecki L."/>
            <person name="Iacono M."/>
            <person name="Ikeo K."/>
            <person name="Iwama A."/>
            <person name="Ishikawa T."/>
            <person name="Jakt M."/>
            <person name="Kanapin A."/>
            <person name="Katoh M."/>
            <person name="Kawasawa Y."/>
            <person name="Kelso J."/>
            <person name="Kitamura H."/>
            <person name="Kitano H."/>
            <person name="Kollias G."/>
            <person name="Krishnan S.P."/>
            <person name="Kruger A."/>
            <person name="Kummerfeld S.K."/>
            <person name="Kurochkin I.V."/>
            <person name="Lareau L.F."/>
            <person name="Lazarevic D."/>
            <person name="Lipovich L."/>
            <person name="Liu J."/>
            <person name="Liuni S."/>
            <person name="McWilliam S."/>
            <person name="Madan Babu M."/>
            <person name="Madera M."/>
            <person name="Marchionni L."/>
            <person name="Matsuda H."/>
            <person name="Matsuzawa S."/>
            <person name="Miki H."/>
            <person name="Mignone F."/>
            <person name="Miyake S."/>
            <person name="Morris K."/>
            <person name="Mottagui-Tabar S."/>
            <person name="Mulder N."/>
            <person name="Nakano N."/>
            <person name="Nakauchi H."/>
            <person name="Ng P."/>
            <person name="Nilsson R."/>
            <person name="Nishiguchi S."/>
            <person name="Nishikawa S."/>
            <person name="Nori F."/>
            <person name="Ohara O."/>
            <person name="Okazaki Y."/>
            <person name="Orlando V."/>
            <person name="Pang K.C."/>
            <person name="Pavan W.J."/>
            <person name="Pavesi G."/>
            <person name="Pesole G."/>
            <person name="Petrovsky N."/>
            <person name="Piazza S."/>
            <person name="Reed J."/>
            <person name="Reid J.F."/>
            <person name="Ring B.Z."/>
            <person name="Ringwald M."/>
            <person name="Rost B."/>
            <person name="Ruan Y."/>
            <person name="Salzberg S.L."/>
            <person name="Sandelin A."/>
            <person name="Schneider C."/>
            <person name="Schoenbach C."/>
            <person name="Sekiguchi K."/>
            <person name="Semple C.A."/>
            <person name="Seno S."/>
            <person name="Sessa L."/>
            <person name="Sheng Y."/>
            <person name="Shibata Y."/>
            <person name="Shimada H."/>
            <person name="Shimada K."/>
            <person name="Silva D."/>
            <person name="Sinclair B."/>
            <person name="Sperling S."/>
            <person name="Stupka E."/>
            <person name="Sugiura K."/>
            <person name="Sultana R."/>
            <person name="Takenaka Y."/>
            <person name="Taki K."/>
            <person name="Tammoja K."/>
            <person name="Tan S.L."/>
            <person name="Tang S."/>
            <person name="Taylor M.S."/>
            <person name="Tegner J."/>
            <person name="Teichmann S.A."/>
            <person name="Ueda H.R."/>
            <person name="van Nimwegen E."/>
            <person name="Verardo R."/>
            <person name="Wei C.L."/>
            <person name="Yagi K."/>
            <person name="Yamanishi H."/>
            <person name="Zabarovsky E."/>
            <person name="Zhu S."/>
            <person name="Zimmer A."/>
            <person name="Hide W."/>
            <person name="Bult C."/>
            <person name="Grimmond S.M."/>
            <person name="Teasdale R.D."/>
            <person name="Liu E.T."/>
            <person name="Brusic V."/>
            <person name="Quackenbush J."/>
            <person name="Wahlestedt C."/>
            <person name="Mattick J.S."/>
            <person name="Hume D.A."/>
            <person name="Kai C."/>
            <person name="Sasaki D."/>
            <person name="Tomaru Y."/>
            <person name="Fukuda S."/>
            <person name="Kanamori-Katayama M."/>
            <person name="Suzuki M."/>
            <person name="Aoki J."/>
            <person name="Arakawa T."/>
            <person name="Iida J."/>
            <person name="Imamura K."/>
            <person name="Itoh M."/>
            <person name="Kato T."/>
            <person name="Kawaji H."/>
            <person name="Kawagashira N."/>
            <person name="Kawashima T."/>
            <person name="Kojima M."/>
            <person name="Kondo S."/>
            <person name="Konno H."/>
            <person name="Nakano K."/>
            <person name="Ninomiya N."/>
            <person name="Nishio T."/>
            <person name="Okada M."/>
            <person name="Plessy C."/>
            <person name="Shibata K."/>
            <person name="Shiraki T."/>
            <person name="Suzuki S."/>
            <person name="Tagami M."/>
            <person name="Waki K."/>
            <person name="Watahiki A."/>
            <person name="Okamura-Oho Y."/>
            <person name="Suzuki H."/>
            <person name="Kawai J."/>
            <person name="Hayashizaki Y."/>
        </authorList>
    </citation>
    <scope>NUCLEOTIDE SEQUENCE [LARGE SCALE MRNA]</scope>
    <source>
        <strain>C57BL/6J</strain>
        <tissue>Pancreas</tissue>
        <tissue>Small intestine</tissue>
        <tissue>Testis</tissue>
    </source>
</reference>
<reference key="2">
    <citation type="journal article" date="2004" name="Genome Res.">
        <title>The status, quality, and expansion of the NIH full-length cDNA project: the Mammalian Gene Collection (MGC).</title>
        <authorList>
            <consortium name="The MGC Project Team"/>
        </authorList>
    </citation>
    <scope>NUCLEOTIDE SEQUENCE [LARGE SCALE MRNA]</scope>
    <source>
        <strain>FVB/N</strain>
        <tissue>Liver</tissue>
    </source>
</reference>
<sequence length="124" mass="14287">MADEEEDPTFEEENEEIGGGAEGGQGKRKRLFSKELRCMMYGFGDDQNPYTESVDILEDLVIEFITEMTHKAMSIGRQGRVQVEDIVFLIRKDPRKFARVKDLLTMNEELKRARKAFDEANYGS</sequence>
<gene>
    <name evidence="4" type="primary">Taf13</name>
    <name evidence="1" type="synonym">Taf2k</name>
</gene>
<dbReference type="EMBL" id="AK007339">
    <property type="protein sequence ID" value="BAB24972.1"/>
    <property type="molecule type" value="mRNA"/>
</dbReference>
<dbReference type="EMBL" id="AK076595">
    <property type="protein sequence ID" value="BAC36408.1"/>
    <property type="molecule type" value="mRNA"/>
</dbReference>
<dbReference type="EMBL" id="AK160171">
    <property type="protein sequence ID" value="BAE35671.1"/>
    <property type="molecule type" value="mRNA"/>
</dbReference>
<dbReference type="EMBL" id="BC021447">
    <property type="protein sequence ID" value="AAH21447.1"/>
    <property type="molecule type" value="mRNA"/>
</dbReference>
<dbReference type="CCDS" id="CCDS17764.1"/>
<dbReference type="RefSeq" id="NP_079720.1">
    <property type="nucleotide sequence ID" value="NM_025444.2"/>
</dbReference>
<dbReference type="SMR" id="P61216"/>
<dbReference type="BioGRID" id="221311">
    <property type="interactions" value="4"/>
</dbReference>
<dbReference type="ComplexPortal" id="CPX-932">
    <property type="entry name" value="General transcription factor complex TFIID"/>
</dbReference>
<dbReference type="ComplexPortal" id="CPX-959">
    <property type="entry name" value="General transcription factor complex TFIID, Taf4b variant"/>
</dbReference>
<dbReference type="FunCoup" id="P61216">
    <property type="interactions" value="2399"/>
</dbReference>
<dbReference type="IntAct" id="P61216">
    <property type="interactions" value="4"/>
</dbReference>
<dbReference type="MINT" id="P61216"/>
<dbReference type="STRING" id="10090.ENSMUSP00000121346"/>
<dbReference type="iPTMnet" id="P61216"/>
<dbReference type="PhosphoSitePlus" id="P61216"/>
<dbReference type="PaxDb" id="10090-ENSMUSP00000121346"/>
<dbReference type="PeptideAtlas" id="P61216"/>
<dbReference type="ProteomicsDB" id="259346"/>
<dbReference type="Pumba" id="P61216"/>
<dbReference type="Antibodypedia" id="33744">
    <property type="antibodies" value="155 antibodies from 23 providers"/>
</dbReference>
<dbReference type="DNASU" id="99730"/>
<dbReference type="Ensembl" id="ENSMUST00000143054.2">
    <property type="protein sequence ID" value="ENSMUSP00000121346.2"/>
    <property type="gene ID" value="ENSMUSG00000048100.14"/>
</dbReference>
<dbReference type="GeneID" id="99730"/>
<dbReference type="KEGG" id="mmu:99730"/>
<dbReference type="UCSC" id="uc008qzh.1">
    <property type="organism name" value="mouse"/>
</dbReference>
<dbReference type="AGR" id="MGI:1913500"/>
<dbReference type="CTD" id="6884"/>
<dbReference type="MGI" id="MGI:1913500">
    <property type="gene designation" value="Taf13"/>
</dbReference>
<dbReference type="VEuPathDB" id="HostDB:ENSMUSG00000048100"/>
<dbReference type="eggNOG" id="KOG3901">
    <property type="taxonomic scope" value="Eukaryota"/>
</dbReference>
<dbReference type="GeneTree" id="ENSGT00390000012981"/>
<dbReference type="HOGENOM" id="CLU_076665_4_0_1"/>
<dbReference type="InParanoid" id="P61216"/>
<dbReference type="OMA" id="CERAMNV"/>
<dbReference type="OrthoDB" id="67105at9989"/>
<dbReference type="PhylomeDB" id="P61216"/>
<dbReference type="TreeFam" id="TF323609"/>
<dbReference type="Reactome" id="R-MMU-674695">
    <property type="pathway name" value="RNA Polymerase II Pre-transcription Events"/>
</dbReference>
<dbReference type="Reactome" id="R-MMU-6804756">
    <property type="pathway name" value="Regulation of TP53 Activity through Phosphorylation"/>
</dbReference>
<dbReference type="Reactome" id="R-MMU-6807505">
    <property type="pathway name" value="RNA polymerase II transcribes snRNA genes"/>
</dbReference>
<dbReference type="Reactome" id="R-MMU-73776">
    <property type="pathway name" value="RNA Polymerase II Promoter Escape"/>
</dbReference>
<dbReference type="Reactome" id="R-MMU-73779">
    <property type="pathway name" value="RNA Polymerase II Transcription Pre-Initiation And Promoter Opening"/>
</dbReference>
<dbReference type="Reactome" id="R-MMU-75953">
    <property type="pathway name" value="RNA Polymerase II Transcription Initiation"/>
</dbReference>
<dbReference type="Reactome" id="R-MMU-76042">
    <property type="pathway name" value="RNA Polymerase II Transcription Initiation And Promoter Clearance"/>
</dbReference>
<dbReference type="BioGRID-ORCS" id="99730">
    <property type="hits" value="28 hits in 78 CRISPR screens"/>
</dbReference>
<dbReference type="ChiTaRS" id="Taf13">
    <property type="organism name" value="mouse"/>
</dbReference>
<dbReference type="PRO" id="PR:P61216"/>
<dbReference type="Proteomes" id="UP000000589">
    <property type="component" value="Chromosome 3"/>
</dbReference>
<dbReference type="RNAct" id="P61216">
    <property type="molecule type" value="protein"/>
</dbReference>
<dbReference type="Bgee" id="ENSMUSG00000048100">
    <property type="expression patterns" value="Expressed in animal zygote and 78 other cell types or tissues"/>
</dbReference>
<dbReference type="GO" id="GO:0005730">
    <property type="term" value="C:nucleolus"/>
    <property type="evidence" value="ECO:0007669"/>
    <property type="project" value="Ensembl"/>
</dbReference>
<dbReference type="GO" id="GO:0005634">
    <property type="term" value="C:nucleus"/>
    <property type="evidence" value="ECO:0000314"/>
    <property type="project" value="MGI"/>
</dbReference>
<dbReference type="GO" id="GO:0005669">
    <property type="term" value="C:transcription factor TFIID complex"/>
    <property type="evidence" value="ECO:0000266"/>
    <property type="project" value="ComplexPortal"/>
</dbReference>
<dbReference type="GO" id="GO:0003677">
    <property type="term" value="F:DNA binding"/>
    <property type="evidence" value="ECO:0000314"/>
    <property type="project" value="MGI"/>
</dbReference>
<dbReference type="GO" id="GO:0046982">
    <property type="term" value="F:protein heterodimerization activity"/>
    <property type="evidence" value="ECO:0007669"/>
    <property type="project" value="InterPro"/>
</dbReference>
<dbReference type="GO" id="GO:0017025">
    <property type="term" value="F:TBP-class protein binding"/>
    <property type="evidence" value="ECO:0007669"/>
    <property type="project" value="Ensembl"/>
</dbReference>
<dbReference type="GO" id="GO:0042789">
    <property type="term" value="P:mRNA transcription by RNA polymerase II"/>
    <property type="evidence" value="ECO:0000266"/>
    <property type="project" value="ComplexPortal"/>
</dbReference>
<dbReference type="GO" id="GO:0060261">
    <property type="term" value="P:positive regulation of transcription initiation by RNA polymerase II"/>
    <property type="evidence" value="ECO:0000266"/>
    <property type="project" value="ComplexPortal"/>
</dbReference>
<dbReference type="GO" id="GO:0051123">
    <property type="term" value="P:RNA polymerase II preinitiation complex assembly"/>
    <property type="evidence" value="ECO:0000266"/>
    <property type="project" value="ComplexPortal"/>
</dbReference>
<dbReference type="CDD" id="cd07978">
    <property type="entry name" value="HFD_TAF13"/>
    <property type="match status" value="1"/>
</dbReference>
<dbReference type="FunFam" id="1.10.20.10:FF:000028">
    <property type="entry name" value="Transcription initiation factor TFIID subunit 13"/>
    <property type="match status" value="1"/>
</dbReference>
<dbReference type="Gene3D" id="1.10.20.10">
    <property type="entry name" value="Histone, subunit A"/>
    <property type="match status" value="1"/>
</dbReference>
<dbReference type="InterPro" id="IPR009072">
    <property type="entry name" value="Histone-fold"/>
</dbReference>
<dbReference type="InterPro" id="IPR003195">
    <property type="entry name" value="TFIID_TAF13"/>
</dbReference>
<dbReference type="PANTHER" id="PTHR11380:SF5">
    <property type="entry name" value="TRANSCRIPTION INITIATION FACTOR TFIID SUBUNIT 13"/>
    <property type="match status" value="1"/>
</dbReference>
<dbReference type="PANTHER" id="PTHR11380">
    <property type="entry name" value="TRANSCRIPTION INITIATION FACTOR TFIID/SUPT3-RELATED"/>
    <property type="match status" value="1"/>
</dbReference>
<dbReference type="Pfam" id="PF02269">
    <property type="entry name" value="TFIID-18kDa"/>
    <property type="match status" value="1"/>
</dbReference>
<dbReference type="SUPFAM" id="SSF47113">
    <property type="entry name" value="Histone-fold"/>
    <property type="match status" value="1"/>
</dbReference>
<evidence type="ECO:0000250" key="1">
    <source>
        <dbReference type="UniProtKB" id="Q15543"/>
    </source>
</evidence>
<evidence type="ECO:0000256" key="2">
    <source>
        <dbReference type="SAM" id="MobiDB-lite"/>
    </source>
</evidence>
<evidence type="ECO:0000305" key="3"/>
<evidence type="ECO:0000312" key="4">
    <source>
        <dbReference type="MGI" id="MGI:1913500"/>
    </source>
</evidence>
<protein>
    <recommendedName>
        <fullName evidence="1">Transcription initiation factor TFIID subunit 13</fullName>
    </recommendedName>
    <alternativeName>
        <fullName evidence="1">Transcription initiation factor TFIID 18 kDa subunit</fullName>
        <shortName evidence="1">TAF(II)18</shortName>
        <shortName evidence="1">TAFII-18</shortName>
        <shortName evidence="1">TAFII18</shortName>
    </alternativeName>
</protein>
<accession>P61216</accession>
<accession>Q3TVE8</accession>
<proteinExistence type="evidence at protein level"/>
<feature type="chain" id="PRO_0000118911" description="Transcription initiation factor TFIID subunit 13">
    <location>
        <begin position="1"/>
        <end position="124"/>
    </location>
</feature>
<feature type="domain" description="Histone-fold" evidence="3">
    <location>
        <begin position="32"/>
        <end position="74"/>
    </location>
</feature>
<feature type="region of interest" description="Disordered" evidence="2">
    <location>
        <begin position="1"/>
        <end position="28"/>
    </location>
</feature>
<feature type="compositionally biased region" description="Acidic residues" evidence="2">
    <location>
        <begin position="1"/>
        <end position="16"/>
    </location>
</feature>
<name>TAF13_MOUSE</name>
<organism>
    <name type="scientific">Mus musculus</name>
    <name type="common">Mouse</name>
    <dbReference type="NCBI Taxonomy" id="10090"/>
    <lineage>
        <taxon>Eukaryota</taxon>
        <taxon>Metazoa</taxon>
        <taxon>Chordata</taxon>
        <taxon>Craniata</taxon>
        <taxon>Vertebrata</taxon>
        <taxon>Euteleostomi</taxon>
        <taxon>Mammalia</taxon>
        <taxon>Eutheria</taxon>
        <taxon>Euarchontoglires</taxon>
        <taxon>Glires</taxon>
        <taxon>Rodentia</taxon>
        <taxon>Myomorpha</taxon>
        <taxon>Muroidea</taxon>
        <taxon>Muridae</taxon>
        <taxon>Murinae</taxon>
        <taxon>Mus</taxon>
        <taxon>Mus</taxon>
    </lineage>
</organism>